<protein>
    <recommendedName>
        <fullName>Putative transport protein YueF</fullName>
    </recommendedName>
</protein>
<accession>O32095</accession>
<organism>
    <name type="scientific">Bacillus subtilis (strain 168)</name>
    <dbReference type="NCBI Taxonomy" id="224308"/>
    <lineage>
        <taxon>Bacteria</taxon>
        <taxon>Bacillati</taxon>
        <taxon>Bacillota</taxon>
        <taxon>Bacilli</taxon>
        <taxon>Bacillales</taxon>
        <taxon>Bacillaceae</taxon>
        <taxon>Bacillus</taxon>
    </lineage>
</organism>
<sequence length="369" mass="40896">MLKSKVHFWTLQILFVLLIIFVATKVSFVFQPFIVFISTLFFPMLIAGILYFIFNPVVRLLEKKIPRTLSILLIYLLFIGLLAFISASVGPIITAQVTGLFNNLPDYIKQIQALTKDLSHSQWFTWMMNQDYVSISKIEQSLTSFLQNLPQNITSSLSAVFGVVTNITLVIITVPFILFYMLKDGHRFPHLAVKILPASYRTEGLKIFKDLSDTLAAYFQGQLLICLFVGTACFIGYLIAGLPYALILGIVMAITNIIPYVGPFLGAAPAVIVGFMDSPAKALFAIIVVVIVQQLDGNLLSPLVIGKRLNTHPLTIILLLIGAGSFGGILGMILAVPVYAVVKAFFLNIVRLIKLRQRSRLEENAKPAE</sequence>
<name>YUEF_BACSU</name>
<gene>
    <name type="primary">yueF</name>
    <name type="ordered locus">BSU31800</name>
</gene>
<keyword id="KW-1003">Cell membrane</keyword>
<keyword id="KW-0472">Membrane</keyword>
<keyword id="KW-1185">Reference proteome</keyword>
<keyword id="KW-0812">Transmembrane</keyword>
<keyword id="KW-1133">Transmembrane helix</keyword>
<keyword id="KW-0813">Transport</keyword>
<proteinExistence type="inferred from homology"/>
<evidence type="ECO:0000255" key="1"/>
<evidence type="ECO:0000305" key="2"/>
<dbReference type="EMBL" id="AL009126">
    <property type="protein sequence ID" value="CAB15168.1"/>
    <property type="molecule type" value="Genomic_DNA"/>
</dbReference>
<dbReference type="PIR" id="G70007">
    <property type="entry name" value="G70007"/>
</dbReference>
<dbReference type="RefSeq" id="NP_391058.1">
    <property type="nucleotide sequence ID" value="NC_000964.3"/>
</dbReference>
<dbReference type="RefSeq" id="WP_003243652.1">
    <property type="nucleotide sequence ID" value="NZ_OZ025638.1"/>
</dbReference>
<dbReference type="SMR" id="O32095"/>
<dbReference type="FunCoup" id="O32095">
    <property type="interactions" value="412"/>
</dbReference>
<dbReference type="STRING" id="224308.BSU31800"/>
<dbReference type="TCDB" id="2.A.86.1.8">
    <property type="family name" value="the autoinducer-2 exporter (ai-2e) family (formerly the perm family, tc #9,b,22)"/>
</dbReference>
<dbReference type="PaxDb" id="224308-BSU31800"/>
<dbReference type="DNASU" id="936534"/>
<dbReference type="EnsemblBacteria" id="CAB15168">
    <property type="protein sequence ID" value="CAB15168"/>
    <property type="gene ID" value="BSU_31800"/>
</dbReference>
<dbReference type="GeneID" id="936534"/>
<dbReference type="KEGG" id="bsu:BSU31800"/>
<dbReference type="PATRIC" id="fig|224308.179.peg.3446"/>
<dbReference type="eggNOG" id="COG0628">
    <property type="taxonomic scope" value="Bacteria"/>
</dbReference>
<dbReference type="InParanoid" id="O32095"/>
<dbReference type="OrthoDB" id="9793390at2"/>
<dbReference type="PhylomeDB" id="O32095"/>
<dbReference type="BioCyc" id="BSUB:BSU31800-MONOMER"/>
<dbReference type="Proteomes" id="UP000001570">
    <property type="component" value="Chromosome"/>
</dbReference>
<dbReference type="GO" id="GO:0005886">
    <property type="term" value="C:plasma membrane"/>
    <property type="evidence" value="ECO:0007669"/>
    <property type="project" value="UniProtKB-SubCell"/>
</dbReference>
<dbReference type="GO" id="GO:0055085">
    <property type="term" value="P:transmembrane transport"/>
    <property type="evidence" value="ECO:0000318"/>
    <property type="project" value="GO_Central"/>
</dbReference>
<dbReference type="InterPro" id="IPR002549">
    <property type="entry name" value="AI-2E-like"/>
</dbReference>
<dbReference type="PANTHER" id="PTHR21716:SF53">
    <property type="entry name" value="PERMEASE PERM-RELATED"/>
    <property type="match status" value="1"/>
</dbReference>
<dbReference type="PANTHER" id="PTHR21716">
    <property type="entry name" value="TRANSMEMBRANE PROTEIN"/>
    <property type="match status" value="1"/>
</dbReference>
<dbReference type="Pfam" id="PF01594">
    <property type="entry name" value="AI-2E_transport"/>
    <property type="match status" value="1"/>
</dbReference>
<reference key="1">
    <citation type="journal article" date="1997" name="Nature">
        <title>The complete genome sequence of the Gram-positive bacterium Bacillus subtilis.</title>
        <authorList>
            <person name="Kunst F."/>
            <person name="Ogasawara N."/>
            <person name="Moszer I."/>
            <person name="Albertini A.M."/>
            <person name="Alloni G."/>
            <person name="Azevedo V."/>
            <person name="Bertero M.G."/>
            <person name="Bessieres P."/>
            <person name="Bolotin A."/>
            <person name="Borchert S."/>
            <person name="Borriss R."/>
            <person name="Boursier L."/>
            <person name="Brans A."/>
            <person name="Braun M."/>
            <person name="Brignell S.C."/>
            <person name="Bron S."/>
            <person name="Brouillet S."/>
            <person name="Bruschi C.V."/>
            <person name="Caldwell B."/>
            <person name="Capuano V."/>
            <person name="Carter N.M."/>
            <person name="Choi S.-K."/>
            <person name="Codani J.-J."/>
            <person name="Connerton I.F."/>
            <person name="Cummings N.J."/>
            <person name="Daniel R.A."/>
            <person name="Denizot F."/>
            <person name="Devine K.M."/>
            <person name="Duesterhoeft A."/>
            <person name="Ehrlich S.D."/>
            <person name="Emmerson P.T."/>
            <person name="Entian K.-D."/>
            <person name="Errington J."/>
            <person name="Fabret C."/>
            <person name="Ferrari E."/>
            <person name="Foulger D."/>
            <person name="Fritz C."/>
            <person name="Fujita M."/>
            <person name="Fujita Y."/>
            <person name="Fuma S."/>
            <person name="Galizzi A."/>
            <person name="Galleron N."/>
            <person name="Ghim S.-Y."/>
            <person name="Glaser P."/>
            <person name="Goffeau A."/>
            <person name="Golightly E.J."/>
            <person name="Grandi G."/>
            <person name="Guiseppi G."/>
            <person name="Guy B.J."/>
            <person name="Haga K."/>
            <person name="Haiech J."/>
            <person name="Harwood C.R."/>
            <person name="Henaut A."/>
            <person name="Hilbert H."/>
            <person name="Holsappel S."/>
            <person name="Hosono S."/>
            <person name="Hullo M.-F."/>
            <person name="Itaya M."/>
            <person name="Jones L.-M."/>
            <person name="Joris B."/>
            <person name="Karamata D."/>
            <person name="Kasahara Y."/>
            <person name="Klaerr-Blanchard M."/>
            <person name="Klein C."/>
            <person name="Kobayashi Y."/>
            <person name="Koetter P."/>
            <person name="Koningstein G."/>
            <person name="Krogh S."/>
            <person name="Kumano M."/>
            <person name="Kurita K."/>
            <person name="Lapidus A."/>
            <person name="Lardinois S."/>
            <person name="Lauber J."/>
            <person name="Lazarevic V."/>
            <person name="Lee S.-M."/>
            <person name="Levine A."/>
            <person name="Liu H."/>
            <person name="Masuda S."/>
            <person name="Mauel C."/>
            <person name="Medigue C."/>
            <person name="Medina N."/>
            <person name="Mellado R.P."/>
            <person name="Mizuno M."/>
            <person name="Moestl D."/>
            <person name="Nakai S."/>
            <person name="Noback M."/>
            <person name="Noone D."/>
            <person name="O'Reilly M."/>
            <person name="Ogawa K."/>
            <person name="Ogiwara A."/>
            <person name="Oudega B."/>
            <person name="Park S.-H."/>
            <person name="Parro V."/>
            <person name="Pohl T.M."/>
            <person name="Portetelle D."/>
            <person name="Porwollik S."/>
            <person name="Prescott A.M."/>
            <person name="Presecan E."/>
            <person name="Pujic P."/>
            <person name="Purnelle B."/>
            <person name="Rapoport G."/>
            <person name="Rey M."/>
            <person name="Reynolds S."/>
            <person name="Rieger M."/>
            <person name="Rivolta C."/>
            <person name="Rocha E."/>
            <person name="Roche B."/>
            <person name="Rose M."/>
            <person name="Sadaie Y."/>
            <person name="Sato T."/>
            <person name="Scanlan E."/>
            <person name="Schleich S."/>
            <person name="Schroeter R."/>
            <person name="Scoffone F."/>
            <person name="Sekiguchi J."/>
            <person name="Sekowska A."/>
            <person name="Seror S.J."/>
            <person name="Serror P."/>
            <person name="Shin B.-S."/>
            <person name="Soldo B."/>
            <person name="Sorokin A."/>
            <person name="Tacconi E."/>
            <person name="Takagi T."/>
            <person name="Takahashi H."/>
            <person name="Takemaru K."/>
            <person name="Takeuchi M."/>
            <person name="Tamakoshi A."/>
            <person name="Tanaka T."/>
            <person name="Terpstra P."/>
            <person name="Tognoni A."/>
            <person name="Tosato V."/>
            <person name="Uchiyama S."/>
            <person name="Vandenbol M."/>
            <person name="Vannier F."/>
            <person name="Vassarotti A."/>
            <person name="Viari A."/>
            <person name="Wambutt R."/>
            <person name="Wedler E."/>
            <person name="Wedler H."/>
            <person name="Weitzenegger T."/>
            <person name="Winters P."/>
            <person name="Wipat A."/>
            <person name="Yamamoto H."/>
            <person name="Yamane K."/>
            <person name="Yasumoto K."/>
            <person name="Yata K."/>
            <person name="Yoshida K."/>
            <person name="Yoshikawa H.-F."/>
            <person name="Zumstein E."/>
            <person name="Yoshikawa H."/>
            <person name="Danchin A."/>
        </authorList>
    </citation>
    <scope>NUCLEOTIDE SEQUENCE [LARGE SCALE GENOMIC DNA]</scope>
    <source>
        <strain>168</strain>
    </source>
</reference>
<comment type="subcellular location">
    <subcellularLocation>
        <location evidence="2">Cell membrane</location>
        <topology evidence="2">Multi-pass membrane protein</topology>
    </subcellularLocation>
</comment>
<comment type="similarity">
    <text evidence="2">Belongs to the autoinducer-2 exporter (AI-2E) (TC 2.A.86) family.</text>
</comment>
<feature type="chain" id="PRO_0000148310" description="Putative transport protein YueF">
    <location>
        <begin position="1"/>
        <end position="369"/>
    </location>
</feature>
<feature type="transmembrane region" description="Helical" evidence="1">
    <location>
        <begin position="13"/>
        <end position="33"/>
    </location>
</feature>
<feature type="transmembrane region" description="Helical" evidence="1">
    <location>
        <begin position="34"/>
        <end position="54"/>
    </location>
</feature>
<feature type="transmembrane region" description="Helical" evidence="1">
    <location>
        <begin position="73"/>
        <end position="93"/>
    </location>
</feature>
<feature type="transmembrane region" description="Helical" evidence="1">
    <location>
        <begin position="159"/>
        <end position="179"/>
    </location>
</feature>
<feature type="transmembrane region" description="Helical" evidence="1">
    <location>
        <begin position="213"/>
        <end position="233"/>
    </location>
</feature>
<feature type="transmembrane region" description="Helical" evidence="1">
    <location>
        <begin position="234"/>
        <end position="254"/>
    </location>
</feature>
<feature type="transmembrane region" description="Helical" evidence="1">
    <location>
        <begin position="271"/>
        <end position="291"/>
    </location>
</feature>
<feature type="transmembrane region" description="Helical" evidence="1">
    <location>
        <begin position="316"/>
        <end position="336"/>
    </location>
</feature>